<feature type="chain" id="PRO_0000338470" description="Nuclease SbcCD subunit C">
    <location>
        <begin position="1"/>
        <end position="1009"/>
    </location>
</feature>
<feature type="coiled-coil region" evidence="2">
    <location>
        <begin position="176"/>
        <end position="364"/>
    </location>
</feature>
<feature type="coiled-coil region" evidence="2">
    <location>
        <begin position="392"/>
        <end position="502"/>
    </location>
</feature>
<feature type="coiled-coil region" evidence="2">
    <location>
        <begin position="535"/>
        <end position="802"/>
    </location>
</feature>
<feature type="binding site" evidence="2">
    <location>
        <begin position="34"/>
        <end position="41"/>
    </location>
    <ligand>
        <name>ATP</name>
        <dbReference type="ChEBI" id="CHEBI:30616"/>
    </ligand>
</feature>
<accession>Q2FYT3</accession>
<keyword id="KW-0067">ATP-binding</keyword>
<keyword id="KW-0175">Coiled coil</keyword>
<keyword id="KW-0227">DNA damage</keyword>
<keyword id="KW-0233">DNA recombination</keyword>
<keyword id="KW-0234">DNA repair</keyword>
<keyword id="KW-0235">DNA replication</keyword>
<keyword id="KW-0255">Endonuclease</keyword>
<keyword id="KW-0269">Exonuclease</keyword>
<keyword id="KW-0378">Hydrolase</keyword>
<keyword id="KW-0540">Nuclease</keyword>
<keyword id="KW-0547">Nucleotide-binding</keyword>
<keyword id="KW-1185">Reference proteome</keyword>
<keyword id="KW-0742">SOS response</keyword>
<gene>
    <name type="primary">sbcC</name>
    <name type="ordered locus">SAOUHSC_01342</name>
</gene>
<comment type="function">
    <text evidence="1 3">SbcCD cleaves DNA hairpin structures. These structures can inhibit DNA replication and are intermediates in certain DNA recombination reactions. The complex acts as a 3'-&gt;5' double strand exonuclease that can open hairpins. It also has a 5' single-strand endonuclease activity (By similarity). Is probably part of the SOS regulon and involved in DNA recombination and repair.</text>
</comment>
<comment type="subunit">
    <text evidence="1">Heterodimer of SbcC and SbcD.</text>
</comment>
<comment type="induction">
    <text evidence="3">Induced by ciprofloxacin and up-regulated by LexA.</text>
</comment>
<comment type="similarity">
    <text evidence="4">Belongs to the SMC family. SbcC subfamily.</text>
</comment>
<comment type="sequence caution" evidence="4">
    <conflict type="frameshift">
        <sequence resource="EMBL-CDS" id="ABD30439"/>
    </conflict>
</comment>
<protein>
    <recommendedName>
        <fullName>Nuclease SbcCD subunit C</fullName>
    </recommendedName>
</protein>
<organism>
    <name type="scientific">Staphylococcus aureus (strain NCTC 8325 / PS 47)</name>
    <dbReference type="NCBI Taxonomy" id="93061"/>
    <lineage>
        <taxon>Bacteria</taxon>
        <taxon>Bacillati</taxon>
        <taxon>Bacillota</taxon>
        <taxon>Bacilli</taxon>
        <taxon>Bacillales</taxon>
        <taxon>Staphylococcaceae</taxon>
        <taxon>Staphylococcus</taxon>
    </lineage>
</organism>
<sequence>MKPLHLKLNNFGPFLKEEIDFSKIDNNELFLISGKTGSGKTMIFDAMTYALFGKASTEQREENDLRSHFADGKQPMSVTFEFQLNHRIYKVHRQGPYIKEGNTTKTNAKFDVFEMVDGKYEIRESKVISGTQFIIELLGVNADQFRQLFILPQGEFKRFLISNSREKQGILRTLFDSEKFEAIREILKEEVKKEKAQIENRYQQIDLLWQEIESFDDDNIKGLLEVATQQIDKLIENIPLLQARSKEILASVNESKETAIKEFEIIEKKTLENNILKDNINQLNKNKIDFVQLNEQQPEIEGIEAKLKLLQDITNLLNYIENREKIETKIANSKKDISKTNNKILNLDCDKRNIDKEKKMLEENGDLIESKISFIDKTRVLFNDINKYQQSYLNIERLRTEGEQLGDELNDLIKGLETVEDSIGNNQSDYEKIIELNNTITNINNEINIIKENEKAKAELDKLLGSKQELENQINEETSILKNLEIKLDRYDKTKLDLNDKESFISEIKSAVNIGDQCPICGNEIQDLGHHIDFDSIAKRQNEIKEIEANIHAIKSNIAVHNSEIKFVNEKISNINIKTQSDFSLEVLNKRLLENENALNNQRDLNKFIEQMKEEKDNLTLQIHNKQLRLNKNESELKLCRDLITEFETLSKYNNITNFEVDYKKYVQDVNQHQELSKEIEDKLMQLSQRKLIEQNNLNHYENQLETYNNDLELNEQSIEMEMSRLNLTDDNDIDEIIAWRGEQEELEQKRDTYKKRYHEFEMEIARLESLTKDKELLDSDKLKDEYELKKGKMNTLIDEYSAVHYQCQNNINKTQSIVSHINYLNQELKDQQEIFQLAEIVSGKNNKNLTLENFVLIYYLDQIIAQANLRLATMSDNRYQLIRREAVSHGLSGLEIDVFDLHSNKSRHISSLSGGETFQSSLALALGLSEIVQQQSGGISLTSIFIDEGFGTLDQETLETALDTLLNLKSTGRMVGIISHVSELKNRIPLVLEVKSDQYQSSTRFKRN</sequence>
<evidence type="ECO:0000250" key="1"/>
<evidence type="ECO:0000255" key="2"/>
<evidence type="ECO:0000269" key="3">
    <source>
    </source>
</evidence>
<evidence type="ECO:0000305" key="4"/>
<proteinExistence type="evidence at protein level"/>
<name>SBCC_STAA8</name>
<dbReference type="EMBL" id="CP000253">
    <property type="protein sequence ID" value="ABD30439.1"/>
    <property type="status" value="ALT_FRAME"/>
    <property type="molecule type" value="Genomic_DNA"/>
</dbReference>
<dbReference type="STRING" id="93061.SAOUHSC_01342"/>
<dbReference type="PaxDb" id="1280-SAXN108_1363"/>
<dbReference type="eggNOG" id="COG0419">
    <property type="taxonomic scope" value="Bacteria"/>
</dbReference>
<dbReference type="HOGENOM" id="CLU_004785_2_1_9"/>
<dbReference type="Proteomes" id="UP000008816">
    <property type="component" value="Chromosome"/>
</dbReference>
<dbReference type="GO" id="GO:1990391">
    <property type="term" value="C:DNA repair complex"/>
    <property type="evidence" value="ECO:0000318"/>
    <property type="project" value="GO_Central"/>
</dbReference>
<dbReference type="GO" id="GO:0005524">
    <property type="term" value="F:ATP binding"/>
    <property type="evidence" value="ECO:0007669"/>
    <property type="project" value="UniProtKB-KW"/>
</dbReference>
<dbReference type="GO" id="GO:0016887">
    <property type="term" value="F:ATP hydrolysis activity"/>
    <property type="evidence" value="ECO:0007669"/>
    <property type="project" value="InterPro"/>
</dbReference>
<dbReference type="GO" id="GO:0004529">
    <property type="term" value="F:DNA exonuclease activity"/>
    <property type="evidence" value="ECO:0000318"/>
    <property type="project" value="GO_Central"/>
</dbReference>
<dbReference type="GO" id="GO:0004519">
    <property type="term" value="F:endonuclease activity"/>
    <property type="evidence" value="ECO:0007669"/>
    <property type="project" value="UniProtKB-KW"/>
</dbReference>
<dbReference type="GO" id="GO:0006310">
    <property type="term" value="P:DNA recombination"/>
    <property type="evidence" value="ECO:0007669"/>
    <property type="project" value="UniProtKB-KW"/>
</dbReference>
<dbReference type="GO" id="GO:0006281">
    <property type="term" value="P:DNA repair"/>
    <property type="evidence" value="ECO:0000318"/>
    <property type="project" value="GO_Central"/>
</dbReference>
<dbReference type="GO" id="GO:0006260">
    <property type="term" value="P:DNA replication"/>
    <property type="evidence" value="ECO:0007669"/>
    <property type="project" value="UniProtKB-KW"/>
</dbReference>
<dbReference type="GO" id="GO:0006302">
    <property type="term" value="P:double-strand break repair"/>
    <property type="evidence" value="ECO:0007669"/>
    <property type="project" value="InterPro"/>
</dbReference>
<dbReference type="GO" id="GO:0009432">
    <property type="term" value="P:SOS response"/>
    <property type="evidence" value="ECO:0007669"/>
    <property type="project" value="UniProtKB-KW"/>
</dbReference>
<dbReference type="CDD" id="cd03279">
    <property type="entry name" value="ABC_sbcCD"/>
    <property type="match status" value="1"/>
</dbReference>
<dbReference type="Gene3D" id="1.10.287.510">
    <property type="entry name" value="Helix hairpin bin"/>
    <property type="match status" value="1"/>
</dbReference>
<dbReference type="Gene3D" id="3.40.50.300">
    <property type="entry name" value="P-loop containing nucleotide triphosphate hydrolases"/>
    <property type="match status" value="2"/>
</dbReference>
<dbReference type="InterPro" id="IPR027417">
    <property type="entry name" value="P-loop_NTPase"/>
</dbReference>
<dbReference type="InterPro" id="IPR038729">
    <property type="entry name" value="Rad50/SbcC_AAA"/>
</dbReference>
<dbReference type="InterPro" id="IPR053380">
    <property type="entry name" value="SbcCD_Nuclease_C"/>
</dbReference>
<dbReference type="NCBIfam" id="NF041751">
    <property type="entry name" value="sbcc_Staph"/>
    <property type="match status" value="1"/>
</dbReference>
<dbReference type="PANTHER" id="PTHR32114">
    <property type="entry name" value="ABC TRANSPORTER ABCH.3"/>
    <property type="match status" value="1"/>
</dbReference>
<dbReference type="PANTHER" id="PTHR32114:SF2">
    <property type="entry name" value="ABC TRANSPORTER ABCH.3"/>
    <property type="match status" value="1"/>
</dbReference>
<dbReference type="Pfam" id="PF13476">
    <property type="entry name" value="AAA_23"/>
    <property type="match status" value="1"/>
</dbReference>
<dbReference type="Pfam" id="PF13558">
    <property type="entry name" value="SbcC_Walker_B"/>
    <property type="match status" value="1"/>
</dbReference>
<dbReference type="SUPFAM" id="SSF52540">
    <property type="entry name" value="P-loop containing nucleoside triphosphate hydrolases"/>
    <property type="match status" value="1"/>
</dbReference>
<dbReference type="SUPFAM" id="SSF75712">
    <property type="entry name" value="Rad50 coiled-coil Zn hook"/>
    <property type="match status" value="1"/>
</dbReference>
<reference key="1">
    <citation type="book" date="2006" name="Gram positive pathogens, 2nd edition">
        <title>The Staphylococcus aureus NCTC 8325 genome.</title>
        <editorList>
            <person name="Fischetti V."/>
            <person name="Novick R."/>
            <person name="Ferretti J."/>
            <person name="Portnoy D."/>
            <person name="Rood J."/>
        </editorList>
        <authorList>
            <person name="Gillaspy A.F."/>
            <person name="Worrell V."/>
            <person name="Orvis J."/>
            <person name="Roe B.A."/>
            <person name="Dyer D.W."/>
            <person name="Iandolo J.J."/>
        </authorList>
    </citation>
    <scope>NUCLEOTIDE SEQUENCE [LARGE SCALE GENOMIC DNA]</scope>
    <source>
        <strain>NCTC 8325 / PS 47</strain>
    </source>
</reference>
<reference key="2">
    <citation type="journal article" date="2007" name="J. Bacteriol.">
        <title>Complete and SOS-mediated response of Staphylococcus aureus to the antibiotic ciprofloxacin.</title>
        <authorList>
            <person name="Cirz R.T."/>
            <person name="Jones M.B."/>
            <person name="Gingles N.A."/>
            <person name="Minogue T.D."/>
            <person name="Jarrahi B."/>
            <person name="Peterson S.N."/>
            <person name="Romesberg F.E."/>
        </authorList>
    </citation>
    <scope>FUNCTION IN SOS RESPONSE</scope>
    <scope>INDUCTION BY CIPROFLOXACIN AND LEXA</scope>
</reference>